<organism>
    <name type="scientific">Bacillus cereus (strain ZK / E33L)</name>
    <dbReference type="NCBI Taxonomy" id="288681"/>
    <lineage>
        <taxon>Bacteria</taxon>
        <taxon>Bacillati</taxon>
        <taxon>Bacillota</taxon>
        <taxon>Bacilli</taxon>
        <taxon>Bacillales</taxon>
        <taxon>Bacillaceae</taxon>
        <taxon>Bacillus</taxon>
        <taxon>Bacillus cereus group</taxon>
    </lineage>
</organism>
<comment type="function">
    <text evidence="1">Catalyzes the formation of pyridoxal 5'-phosphate from ribose 5-phosphate (RBP), glyceraldehyde 3-phosphate (G3P) and ammonia. The ammonia is provided by the PdxT subunit. Can also use ribulose 5-phosphate and dihydroxyacetone phosphate as substrates, resulting from enzyme-catalyzed isomerization of RBP and G3P, respectively.</text>
</comment>
<comment type="catalytic activity">
    <reaction evidence="1">
        <text>aldehydo-D-ribose 5-phosphate + D-glyceraldehyde 3-phosphate + L-glutamine = pyridoxal 5'-phosphate + L-glutamate + phosphate + 3 H2O + H(+)</text>
        <dbReference type="Rhea" id="RHEA:31507"/>
        <dbReference type="ChEBI" id="CHEBI:15377"/>
        <dbReference type="ChEBI" id="CHEBI:15378"/>
        <dbReference type="ChEBI" id="CHEBI:29985"/>
        <dbReference type="ChEBI" id="CHEBI:43474"/>
        <dbReference type="ChEBI" id="CHEBI:58273"/>
        <dbReference type="ChEBI" id="CHEBI:58359"/>
        <dbReference type="ChEBI" id="CHEBI:59776"/>
        <dbReference type="ChEBI" id="CHEBI:597326"/>
        <dbReference type="EC" id="4.3.3.6"/>
    </reaction>
</comment>
<comment type="pathway">
    <text evidence="1">Cofactor biosynthesis; pyridoxal 5'-phosphate biosynthesis.</text>
</comment>
<comment type="subunit">
    <text evidence="1">In the presence of PdxT, forms a dodecamer of heterodimers.</text>
</comment>
<comment type="similarity">
    <text evidence="1">Belongs to the PdxS/SNZ family.</text>
</comment>
<protein>
    <recommendedName>
        <fullName evidence="1">Pyridoxal 5'-phosphate synthase subunit PdxS</fullName>
        <shortName evidence="1">PLP synthase subunit PdxS</shortName>
        <ecNumber evidence="1">4.3.3.6</ecNumber>
    </recommendedName>
    <alternativeName>
        <fullName evidence="1">Pdx1</fullName>
    </alternativeName>
</protein>
<feature type="chain" id="PRO_0000109376" description="Pyridoxal 5'-phosphate synthase subunit PdxS">
    <location>
        <begin position="1"/>
        <end position="295"/>
    </location>
</feature>
<feature type="active site" description="Schiff-base intermediate with D-ribose 5-phosphate" evidence="1">
    <location>
        <position position="82"/>
    </location>
</feature>
<feature type="binding site" evidence="1">
    <location>
        <position position="25"/>
    </location>
    <ligand>
        <name>D-ribose 5-phosphate</name>
        <dbReference type="ChEBI" id="CHEBI:78346"/>
    </ligand>
</feature>
<feature type="binding site" evidence="1">
    <location>
        <position position="154"/>
    </location>
    <ligand>
        <name>D-ribose 5-phosphate</name>
        <dbReference type="ChEBI" id="CHEBI:78346"/>
    </ligand>
</feature>
<feature type="binding site" evidence="1">
    <location>
        <position position="166"/>
    </location>
    <ligand>
        <name>D-glyceraldehyde 3-phosphate</name>
        <dbReference type="ChEBI" id="CHEBI:59776"/>
    </ligand>
</feature>
<feature type="binding site" evidence="1">
    <location>
        <position position="215"/>
    </location>
    <ligand>
        <name>D-ribose 5-phosphate</name>
        <dbReference type="ChEBI" id="CHEBI:78346"/>
    </ligand>
</feature>
<feature type="binding site" evidence="1">
    <location>
        <begin position="236"/>
        <end position="237"/>
    </location>
    <ligand>
        <name>D-ribose 5-phosphate</name>
        <dbReference type="ChEBI" id="CHEBI:78346"/>
    </ligand>
</feature>
<reference key="1">
    <citation type="journal article" date="2006" name="J. Bacteriol.">
        <title>Pathogenomic sequence analysis of Bacillus cereus and Bacillus thuringiensis isolates closely related to Bacillus anthracis.</title>
        <authorList>
            <person name="Han C.S."/>
            <person name="Xie G."/>
            <person name="Challacombe J.F."/>
            <person name="Altherr M.R."/>
            <person name="Bhotika S.S."/>
            <person name="Bruce D."/>
            <person name="Campbell C.S."/>
            <person name="Campbell M.L."/>
            <person name="Chen J."/>
            <person name="Chertkov O."/>
            <person name="Cleland C."/>
            <person name="Dimitrijevic M."/>
            <person name="Doggett N.A."/>
            <person name="Fawcett J.J."/>
            <person name="Glavina T."/>
            <person name="Goodwin L.A."/>
            <person name="Hill K.K."/>
            <person name="Hitchcock P."/>
            <person name="Jackson P.J."/>
            <person name="Keim P."/>
            <person name="Kewalramani A.R."/>
            <person name="Longmire J."/>
            <person name="Lucas S."/>
            <person name="Malfatti S."/>
            <person name="McMurry K."/>
            <person name="Meincke L.J."/>
            <person name="Misra M."/>
            <person name="Moseman B.L."/>
            <person name="Mundt M."/>
            <person name="Munk A.C."/>
            <person name="Okinaka R.T."/>
            <person name="Parson-Quintana B."/>
            <person name="Reilly L.P."/>
            <person name="Richardson P."/>
            <person name="Robinson D.L."/>
            <person name="Rubin E."/>
            <person name="Saunders E."/>
            <person name="Tapia R."/>
            <person name="Tesmer J.G."/>
            <person name="Thayer N."/>
            <person name="Thompson L.S."/>
            <person name="Tice H."/>
            <person name="Ticknor L.O."/>
            <person name="Wills P.L."/>
            <person name="Brettin T.S."/>
            <person name="Gilna P."/>
        </authorList>
    </citation>
    <scope>NUCLEOTIDE SEQUENCE [LARGE SCALE GENOMIC DNA]</scope>
    <source>
        <strain>ZK / E33L</strain>
    </source>
</reference>
<name>PDXS_BACCZ</name>
<evidence type="ECO:0000255" key="1">
    <source>
        <dbReference type="HAMAP-Rule" id="MF_01824"/>
    </source>
</evidence>
<accession>Q63HF8</accession>
<dbReference type="EC" id="4.3.3.6" evidence="1"/>
<dbReference type="EMBL" id="CP000001">
    <property type="protein sequence ID" value="AAU20218.1"/>
    <property type="molecule type" value="Genomic_DNA"/>
</dbReference>
<dbReference type="RefSeq" id="WP_000186156.1">
    <property type="nucleotide sequence ID" value="NZ_CP009968.1"/>
</dbReference>
<dbReference type="SMR" id="Q63HF8"/>
<dbReference type="GeneID" id="93011062"/>
<dbReference type="KEGG" id="bcz:BCE33L0011"/>
<dbReference type="PATRIC" id="fig|288681.22.peg.145"/>
<dbReference type="UniPathway" id="UPA00245"/>
<dbReference type="Proteomes" id="UP000002612">
    <property type="component" value="Chromosome"/>
</dbReference>
<dbReference type="GO" id="GO:0036381">
    <property type="term" value="F:pyridoxal 5'-phosphate synthase (glutamine hydrolysing) activity"/>
    <property type="evidence" value="ECO:0007669"/>
    <property type="project" value="UniProtKB-UniRule"/>
</dbReference>
<dbReference type="GO" id="GO:0006520">
    <property type="term" value="P:amino acid metabolic process"/>
    <property type="evidence" value="ECO:0007669"/>
    <property type="project" value="TreeGrafter"/>
</dbReference>
<dbReference type="GO" id="GO:0042823">
    <property type="term" value="P:pyridoxal phosphate biosynthetic process"/>
    <property type="evidence" value="ECO:0007669"/>
    <property type="project" value="UniProtKB-UniRule"/>
</dbReference>
<dbReference type="GO" id="GO:0008615">
    <property type="term" value="P:pyridoxine biosynthetic process"/>
    <property type="evidence" value="ECO:0007669"/>
    <property type="project" value="TreeGrafter"/>
</dbReference>
<dbReference type="CDD" id="cd04727">
    <property type="entry name" value="pdxS"/>
    <property type="match status" value="1"/>
</dbReference>
<dbReference type="FunFam" id="3.20.20.70:FF:000001">
    <property type="entry name" value="Pyridoxine biosynthesis protein PDX1"/>
    <property type="match status" value="1"/>
</dbReference>
<dbReference type="Gene3D" id="3.20.20.70">
    <property type="entry name" value="Aldolase class I"/>
    <property type="match status" value="1"/>
</dbReference>
<dbReference type="HAMAP" id="MF_01824">
    <property type="entry name" value="PdxS"/>
    <property type="match status" value="1"/>
</dbReference>
<dbReference type="InterPro" id="IPR013785">
    <property type="entry name" value="Aldolase_TIM"/>
</dbReference>
<dbReference type="InterPro" id="IPR001852">
    <property type="entry name" value="PdxS/SNZ"/>
</dbReference>
<dbReference type="InterPro" id="IPR033755">
    <property type="entry name" value="PdxS/SNZ_N"/>
</dbReference>
<dbReference type="InterPro" id="IPR011060">
    <property type="entry name" value="RibuloseP-bd_barrel"/>
</dbReference>
<dbReference type="NCBIfam" id="NF003215">
    <property type="entry name" value="PRK04180.1"/>
    <property type="match status" value="1"/>
</dbReference>
<dbReference type="NCBIfam" id="TIGR00343">
    <property type="entry name" value="pyridoxal 5'-phosphate synthase lyase subunit PdxS"/>
    <property type="match status" value="1"/>
</dbReference>
<dbReference type="PANTHER" id="PTHR31829">
    <property type="entry name" value="PYRIDOXAL 5'-PHOSPHATE SYNTHASE SUBUNIT SNZ1-RELATED"/>
    <property type="match status" value="1"/>
</dbReference>
<dbReference type="PANTHER" id="PTHR31829:SF0">
    <property type="entry name" value="PYRIDOXAL 5'-PHOSPHATE SYNTHASE SUBUNIT SNZ1-RELATED"/>
    <property type="match status" value="1"/>
</dbReference>
<dbReference type="Pfam" id="PF01680">
    <property type="entry name" value="SOR_SNZ"/>
    <property type="match status" value="1"/>
</dbReference>
<dbReference type="PIRSF" id="PIRSF029271">
    <property type="entry name" value="Pdx1"/>
    <property type="match status" value="1"/>
</dbReference>
<dbReference type="SUPFAM" id="SSF51366">
    <property type="entry name" value="Ribulose-phoshate binding barrel"/>
    <property type="match status" value="1"/>
</dbReference>
<dbReference type="PROSITE" id="PS01235">
    <property type="entry name" value="PDXS_SNZ_1"/>
    <property type="match status" value="1"/>
</dbReference>
<dbReference type="PROSITE" id="PS51129">
    <property type="entry name" value="PDXS_SNZ_2"/>
    <property type="match status" value="1"/>
</dbReference>
<gene>
    <name evidence="1" type="primary">pdxS</name>
    <name type="ordered locus">BCE33L0011</name>
</gene>
<sequence>MTNVTGTERVKRGMAEMQKGGVIMDVINAEQAKIAEEAGAVAVMALERVPADIRAAGGVSRMADPTIVEEVMGAVSIPVMAKCRIGHLVEARVLESLGVDYIDESEVLTPADEVYHLNKRDYTVPFVCGCRDIGEAARRIAEGASMLRTKGEPGTGNIVEAVRHMRQVNAEIRQVASLREDELMTYAKNTGAPYEVLLEIKRLGRLPVVNFAAGGVATPADAALMMQLGADGVFVGSGIFKSENPAKFARAIVEATTHYEDYELIASLSKGLGNAMKGIEISTLLPEQRMQERGW</sequence>
<keyword id="KW-0456">Lyase</keyword>
<keyword id="KW-0663">Pyridoxal phosphate</keyword>
<keyword id="KW-0704">Schiff base</keyword>
<proteinExistence type="inferred from homology"/>